<dbReference type="EC" id="6.1.1.22" evidence="1"/>
<dbReference type="EMBL" id="CP000681">
    <property type="protein sequence ID" value="ABP75527.1"/>
    <property type="molecule type" value="Genomic_DNA"/>
</dbReference>
<dbReference type="SMR" id="A4Y6E4"/>
<dbReference type="STRING" id="319224.Sputcn32_1803"/>
<dbReference type="KEGG" id="spc:Sputcn32_1803"/>
<dbReference type="eggNOG" id="COG0017">
    <property type="taxonomic scope" value="Bacteria"/>
</dbReference>
<dbReference type="HOGENOM" id="CLU_004553_2_0_6"/>
<dbReference type="GO" id="GO:0005737">
    <property type="term" value="C:cytoplasm"/>
    <property type="evidence" value="ECO:0007669"/>
    <property type="project" value="UniProtKB-SubCell"/>
</dbReference>
<dbReference type="GO" id="GO:0004816">
    <property type="term" value="F:asparagine-tRNA ligase activity"/>
    <property type="evidence" value="ECO:0007669"/>
    <property type="project" value="UniProtKB-UniRule"/>
</dbReference>
<dbReference type="GO" id="GO:0005524">
    <property type="term" value="F:ATP binding"/>
    <property type="evidence" value="ECO:0007669"/>
    <property type="project" value="UniProtKB-UniRule"/>
</dbReference>
<dbReference type="GO" id="GO:0003676">
    <property type="term" value="F:nucleic acid binding"/>
    <property type="evidence" value="ECO:0007669"/>
    <property type="project" value="InterPro"/>
</dbReference>
<dbReference type="GO" id="GO:0006421">
    <property type="term" value="P:asparaginyl-tRNA aminoacylation"/>
    <property type="evidence" value="ECO:0007669"/>
    <property type="project" value="UniProtKB-UniRule"/>
</dbReference>
<dbReference type="CDD" id="cd00776">
    <property type="entry name" value="AsxRS_core"/>
    <property type="match status" value="1"/>
</dbReference>
<dbReference type="CDD" id="cd04318">
    <property type="entry name" value="EcAsnRS_like_N"/>
    <property type="match status" value="1"/>
</dbReference>
<dbReference type="FunFam" id="3.30.930.10:FF:000016">
    <property type="entry name" value="Asparagine--tRNA ligase"/>
    <property type="match status" value="1"/>
</dbReference>
<dbReference type="Gene3D" id="3.30.930.10">
    <property type="entry name" value="Bira Bifunctional Protein, Domain 2"/>
    <property type="match status" value="1"/>
</dbReference>
<dbReference type="Gene3D" id="2.40.50.140">
    <property type="entry name" value="Nucleic acid-binding proteins"/>
    <property type="match status" value="1"/>
</dbReference>
<dbReference type="HAMAP" id="MF_00534">
    <property type="entry name" value="Asn_tRNA_synth"/>
    <property type="match status" value="1"/>
</dbReference>
<dbReference type="InterPro" id="IPR004364">
    <property type="entry name" value="Aa-tRNA-synt_II"/>
</dbReference>
<dbReference type="InterPro" id="IPR006195">
    <property type="entry name" value="aa-tRNA-synth_II"/>
</dbReference>
<dbReference type="InterPro" id="IPR045864">
    <property type="entry name" value="aa-tRNA-synth_II/BPL/LPL"/>
</dbReference>
<dbReference type="InterPro" id="IPR004522">
    <property type="entry name" value="Asn-tRNA-ligase"/>
</dbReference>
<dbReference type="InterPro" id="IPR002312">
    <property type="entry name" value="Asp/Asn-tRNA-synth_IIb"/>
</dbReference>
<dbReference type="InterPro" id="IPR012340">
    <property type="entry name" value="NA-bd_OB-fold"/>
</dbReference>
<dbReference type="InterPro" id="IPR004365">
    <property type="entry name" value="NA-bd_OB_tRNA"/>
</dbReference>
<dbReference type="NCBIfam" id="TIGR00457">
    <property type="entry name" value="asnS"/>
    <property type="match status" value="1"/>
</dbReference>
<dbReference type="NCBIfam" id="NF003037">
    <property type="entry name" value="PRK03932.1"/>
    <property type="match status" value="1"/>
</dbReference>
<dbReference type="PANTHER" id="PTHR22594:SF34">
    <property type="entry name" value="ASPARAGINE--TRNA LIGASE, MITOCHONDRIAL-RELATED"/>
    <property type="match status" value="1"/>
</dbReference>
<dbReference type="PANTHER" id="PTHR22594">
    <property type="entry name" value="ASPARTYL/LYSYL-TRNA SYNTHETASE"/>
    <property type="match status" value="1"/>
</dbReference>
<dbReference type="Pfam" id="PF00152">
    <property type="entry name" value="tRNA-synt_2"/>
    <property type="match status" value="1"/>
</dbReference>
<dbReference type="Pfam" id="PF01336">
    <property type="entry name" value="tRNA_anti-codon"/>
    <property type="match status" value="1"/>
</dbReference>
<dbReference type="PRINTS" id="PR01042">
    <property type="entry name" value="TRNASYNTHASP"/>
</dbReference>
<dbReference type="SUPFAM" id="SSF55681">
    <property type="entry name" value="Class II aaRS and biotin synthetases"/>
    <property type="match status" value="1"/>
</dbReference>
<dbReference type="SUPFAM" id="SSF50249">
    <property type="entry name" value="Nucleic acid-binding proteins"/>
    <property type="match status" value="1"/>
</dbReference>
<dbReference type="PROSITE" id="PS50862">
    <property type="entry name" value="AA_TRNA_LIGASE_II"/>
    <property type="match status" value="1"/>
</dbReference>
<sequence length="466" mass="52181">MSIASVASVFKGEHAVGSKVTVRGWVRTRRDSKAGISFLAVYDGSCFNPIQGVVPNSLENYDNEVLKLTAGCSVVMTGDVVESPGAGQAFELQVTELEVTGWVDDPDTYPMAAKRHSIEHLRELAHLRPRTNIIGAVARVRNCLSQAIHRFYHEEGFIWVSTPLITASDCEGAGEMFRVSTLDMENLPRTSEGKVDYDKDFFGKEAFLTVSGQLNGETYACALSKIYTFGPTFRAENSNTSRHLAEFWMVEPEVAFATLSDIAGLAEAMLKYAFNAVLTERMDDLQFFAQHVDKTVIERLQSFVSSDFAQVDYTDAVDILQKCGKTFEFPVSWGIDLSSEHERYLAEEHFKAPVVVKNYPKDIKAFYMRLNEDGKTVAAMDVLAPGIGEIIGGSQREERLDVLDMRLAEMDLNKEDYWWYRDLRRYGTVPHAGFGLGFERLVSYVTGVSNIRDVIPFPRAPRTANF</sequence>
<gene>
    <name evidence="1" type="primary">asnS</name>
    <name type="ordered locus">Sputcn32_1803</name>
</gene>
<reference key="1">
    <citation type="submission" date="2007-04" db="EMBL/GenBank/DDBJ databases">
        <title>Complete sequence of Shewanella putrefaciens CN-32.</title>
        <authorList>
            <consortium name="US DOE Joint Genome Institute"/>
            <person name="Copeland A."/>
            <person name="Lucas S."/>
            <person name="Lapidus A."/>
            <person name="Barry K."/>
            <person name="Detter J.C."/>
            <person name="Glavina del Rio T."/>
            <person name="Hammon N."/>
            <person name="Israni S."/>
            <person name="Dalin E."/>
            <person name="Tice H."/>
            <person name="Pitluck S."/>
            <person name="Chain P."/>
            <person name="Malfatti S."/>
            <person name="Shin M."/>
            <person name="Vergez L."/>
            <person name="Schmutz J."/>
            <person name="Larimer F."/>
            <person name="Land M."/>
            <person name="Hauser L."/>
            <person name="Kyrpides N."/>
            <person name="Mikhailova N."/>
            <person name="Romine M.F."/>
            <person name="Fredrickson J."/>
            <person name="Tiedje J."/>
            <person name="Richardson P."/>
        </authorList>
    </citation>
    <scope>NUCLEOTIDE SEQUENCE [LARGE SCALE GENOMIC DNA]</scope>
    <source>
        <strain>CN-32 / ATCC BAA-453</strain>
    </source>
</reference>
<keyword id="KW-0030">Aminoacyl-tRNA synthetase</keyword>
<keyword id="KW-0067">ATP-binding</keyword>
<keyword id="KW-0963">Cytoplasm</keyword>
<keyword id="KW-0436">Ligase</keyword>
<keyword id="KW-0547">Nucleotide-binding</keyword>
<keyword id="KW-0648">Protein biosynthesis</keyword>
<accession>A4Y6E4</accession>
<evidence type="ECO:0000255" key="1">
    <source>
        <dbReference type="HAMAP-Rule" id="MF_00534"/>
    </source>
</evidence>
<comment type="catalytic activity">
    <reaction evidence="1">
        <text>tRNA(Asn) + L-asparagine + ATP = L-asparaginyl-tRNA(Asn) + AMP + diphosphate + H(+)</text>
        <dbReference type="Rhea" id="RHEA:11180"/>
        <dbReference type="Rhea" id="RHEA-COMP:9659"/>
        <dbReference type="Rhea" id="RHEA-COMP:9674"/>
        <dbReference type="ChEBI" id="CHEBI:15378"/>
        <dbReference type="ChEBI" id="CHEBI:30616"/>
        <dbReference type="ChEBI" id="CHEBI:33019"/>
        <dbReference type="ChEBI" id="CHEBI:58048"/>
        <dbReference type="ChEBI" id="CHEBI:78442"/>
        <dbReference type="ChEBI" id="CHEBI:78515"/>
        <dbReference type="ChEBI" id="CHEBI:456215"/>
        <dbReference type="EC" id="6.1.1.22"/>
    </reaction>
</comment>
<comment type="subunit">
    <text evidence="1">Homodimer.</text>
</comment>
<comment type="subcellular location">
    <subcellularLocation>
        <location evidence="1">Cytoplasm</location>
    </subcellularLocation>
</comment>
<comment type="similarity">
    <text evidence="1">Belongs to the class-II aminoacyl-tRNA synthetase family.</text>
</comment>
<feature type="chain" id="PRO_1000051425" description="Asparagine--tRNA ligase">
    <location>
        <begin position="1"/>
        <end position="466"/>
    </location>
</feature>
<proteinExistence type="inferred from homology"/>
<protein>
    <recommendedName>
        <fullName evidence="1">Asparagine--tRNA ligase</fullName>
        <ecNumber evidence="1">6.1.1.22</ecNumber>
    </recommendedName>
    <alternativeName>
        <fullName evidence="1">Asparaginyl-tRNA synthetase</fullName>
        <shortName evidence="1">AsnRS</shortName>
    </alternativeName>
</protein>
<organism>
    <name type="scientific">Shewanella putrefaciens (strain CN-32 / ATCC BAA-453)</name>
    <dbReference type="NCBI Taxonomy" id="319224"/>
    <lineage>
        <taxon>Bacteria</taxon>
        <taxon>Pseudomonadati</taxon>
        <taxon>Pseudomonadota</taxon>
        <taxon>Gammaproteobacteria</taxon>
        <taxon>Alteromonadales</taxon>
        <taxon>Shewanellaceae</taxon>
        <taxon>Shewanella</taxon>
    </lineage>
</organism>
<name>SYN_SHEPC</name>